<reference key="1">
    <citation type="journal article" date="2010" name="Genome Biol. Evol.">
        <title>Continuing evolution of Burkholderia mallei through genome reduction and large-scale rearrangements.</title>
        <authorList>
            <person name="Losada L."/>
            <person name="Ronning C.M."/>
            <person name="DeShazer D."/>
            <person name="Woods D."/>
            <person name="Fedorova N."/>
            <person name="Kim H.S."/>
            <person name="Shabalina S.A."/>
            <person name="Pearson T.R."/>
            <person name="Brinkac L."/>
            <person name="Tan P."/>
            <person name="Nandi T."/>
            <person name="Crabtree J."/>
            <person name="Badger J."/>
            <person name="Beckstrom-Sternberg S."/>
            <person name="Saqib M."/>
            <person name="Schutzer S.E."/>
            <person name="Keim P."/>
            <person name="Nierman W.C."/>
        </authorList>
    </citation>
    <scope>NUCLEOTIDE SEQUENCE [LARGE SCALE GENOMIC DNA]</scope>
    <source>
        <strain>1106a</strain>
    </source>
</reference>
<protein>
    <recommendedName>
        <fullName evidence="1">Chaperone protein DnaK</fullName>
    </recommendedName>
    <alternativeName>
        <fullName evidence="1">HSP70</fullName>
    </alternativeName>
    <alternativeName>
        <fullName evidence="1">Heat shock 70 kDa protein</fullName>
    </alternativeName>
    <alternativeName>
        <fullName evidence="1">Heat shock protein 70</fullName>
    </alternativeName>
</protein>
<proteinExistence type="inferred from homology"/>
<gene>
    <name evidence="1" type="primary">dnaK</name>
    <name type="ordered locus">BURPS1106A_3311</name>
</gene>
<dbReference type="EMBL" id="CP000572">
    <property type="protein sequence ID" value="ABN90978.1"/>
    <property type="molecule type" value="Genomic_DNA"/>
</dbReference>
<dbReference type="RefSeq" id="WP_004194034.1">
    <property type="nucleotide sequence ID" value="NC_009076.1"/>
</dbReference>
<dbReference type="SMR" id="A3NYX7"/>
<dbReference type="GeneID" id="92980018"/>
<dbReference type="KEGG" id="bpl:BURPS1106A_3311"/>
<dbReference type="HOGENOM" id="CLU_005965_2_1_4"/>
<dbReference type="Proteomes" id="UP000006738">
    <property type="component" value="Chromosome I"/>
</dbReference>
<dbReference type="GO" id="GO:0005524">
    <property type="term" value="F:ATP binding"/>
    <property type="evidence" value="ECO:0007669"/>
    <property type="project" value="UniProtKB-UniRule"/>
</dbReference>
<dbReference type="GO" id="GO:0140662">
    <property type="term" value="F:ATP-dependent protein folding chaperone"/>
    <property type="evidence" value="ECO:0007669"/>
    <property type="project" value="InterPro"/>
</dbReference>
<dbReference type="GO" id="GO:0051082">
    <property type="term" value="F:unfolded protein binding"/>
    <property type="evidence" value="ECO:0007669"/>
    <property type="project" value="InterPro"/>
</dbReference>
<dbReference type="CDD" id="cd10234">
    <property type="entry name" value="ASKHA_NBD_HSP70_DnaK-like"/>
    <property type="match status" value="1"/>
</dbReference>
<dbReference type="FunFam" id="2.60.34.10:FF:000014">
    <property type="entry name" value="Chaperone protein DnaK HSP70"/>
    <property type="match status" value="1"/>
</dbReference>
<dbReference type="FunFam" id="1.20.1270.10:FF:000001">
    <property type="entry name" value="Molecular chaperone DnaK"/>
    <property type="match status" value="1"/>
</dbReference>
<dbReference type="FunFam" id="3.30.420.40:FF:000004">
    <property type="entry name" value="Molecular chaperone DnaK"/>
    <property type="match status" value="1"/>
</dbReference>
<dbReference type="FunFam" id="3.90.640.10:FF:000003">
    <property type="entry name" value="Molecular chaperone DnaK"/>
    <property type="match status" value="1"/>
</dbReference>
<dbReference type="Gene3D" id="1.20.1270.10">
    <property type="match status" value="1"/>
</dbReference>
<dbReference type="Gene3D" id="3.30.420.40">
    <property type="match status" value="2"/>
</dbReference>
<dbReference type="Gene3D" id="3.90.640.10">
    <property type="entry name" value="Actin, Chain A, domain 4"/>
    <property type="match status" value="1"/>
</dbReference>
<dbReference type="Gene3D" id="2.60.34.10">
    <property type="entry name" value="Substrate Binding Domain Of DNAk, Chain A, domain 1"/>
    <property type="match status" value="1"/>
</dbReference>
<dbReference type="HAMAP" id="MF_00332">
    <property type="entry name" value="DnaK"/>
    <property type="match status" value="1"/>
</dbReference>
<dbReference type="InterPro" id="IPR043129">
    <property type="entry name" value="ATPase_NBD"/>
</dbReference>
<dbReference type="InterPro" id="IPR012725">
    <property type="entry name" value="Chaperone_DnaK"/>
</dbReference>
<dbReference type="InterPro" id="IPR018181">
    <property type="entry name" value="Heat_shock_70_CS"/>
</dbReference>
<dbReference type="InterPro" id="IPR029048">
    <property type="entry name" value="HSP70_C_sf"/>
</dbReference>
<dbReference type="InterPro" id="IPR029047">
    <property type="entry name" value="HSP70_peptide-bd_sf"/>
</dbReference>
<dbReference type="InterPro" id="IPR013126">
    <property type="entry name" value="Hsp_70_fam"/>
</dbReference>
<dbReference type="NCBIfam" id="NF001413">
    <property type="entry name" value="PRK00290.1"/>
    <property type="match status" value="1"/>
</dbReference>
<dbReference type="NCBIfam" id="NF003520">
    <property type="entry name" value="PRK05183.1"/>
    <property type="match status" value="1"/>
</dbReference>
<dbReference type="NCBIfam" id="TIGR02350">
    <property type="entry name" value="prok_dnaK"/>
    <property type="match status" value="1"/>
</dbReference>
<dbReference type="PANTHER" id="PTHR19375">
    <property type="entry name" value="HEAT SHOCK PROTEIN 70KDA"/>
    <property type="match status" value="1"/>
</dbReference>
<dbReference type="Pfam" id="PF00012">
    <property type="entry name" value="HSP70"/>
    <property type="match status" value="1"/>
</dbReference>
<dbReference type="PRINTS" id="PR00301">
    <property type="entry name" value="HEATSHOCK70"/>
</dbReference>
<dbReference type="SUPFAM" id="SSF53067">
    <property type="entry name" value="Actin-like ATPase domain"/>
    <property type="match status" value="2"/>
</dbReference>
<dbReference type="SUPFAM" id="SSF100934">
    <property type="entry name" value="Heat shock protein 70kD (HSP70), C-terminal subdomain"/>
    <property type="match status" value="1"/>
</dbReference>
<dbReference type="SUPFAM" id="SSF100920">
    <property type="entry name" value="Heat shock protein 70kD (HSP70), peptide-binding domain"/>
    <property type="match status" value="1"/>
</dbReference>
<dbReference type="PROSITE" id="PS00297">
    <property type="entry name" value="HSP70_1"/>
    <property type="match status" value="1"/>
</dbReference>
<dbReference type="PROSITE" id="PS00329">
    <property type="entry name" value="HSP70_2"/>
    <property type="match status" value="1"/>
</dbReference>
<dbReference type="PROSITE" id="PS01036">
    <property type="entry name" value="HSP70_3"/>
    <property type="match status" value="1"/>
</dbReference>
<organism>
    <name type="scientific">Burkholderia pseudomallei (strain 1106a)</name>
    <dbReference type="NCBI Taxonomy" id="357348"/>
    <lineage>
        <taxon>Bacteria</taxon>
        <taxon>Pseudomonadati</taxon>
        <taxon>Pseudomonadota</taxon>
        <taxon>Betaproteobacteria</taxon>
        <taxon>Burkholderiales</taxon>
        <taxon>Burkholderiaceae</taxon>
        <taxon>Burkholderia</taxon>
        <taxon>pseudomallei group</taxon>
    </lineage>
</organism>
<feature type="chain" id="PRO_1000059523" description="Chaperone protein DnaK">
    <location>
        <begin position="1"/>
        <end position="650"/>
    </location>
</feature>
<feature type="region of interest" description="Disordered" evidence="2">
    <location>
        <begin position="611"/>
        <end position="650"/>
    </location>
</feature>
<feature type="compositionally biased region" description="Low complexity" evidence="2">
    <location>
        <begin position="611"/>
        <end position="636"/>
    </location>
</feature>
<feature type="modified residue" description="Phosphothreonine; by autocatalysis" evidence="1">
    <location>
        <position position="200"/>
    </location>
</feature>
<comment type="function">
    <text evidence="1">Acts as a chaperone.</text>
</comment>
<comment type="induction">
    <text evidence="1">By stress conditions e.g. heat shock.</text>
</comment>
<comment type="similarity">
    <text evidence="1">Belongs to the heat shock protein 70 family.</text>
</comment>
<name>DNAK_BURP0</name>
<keyword id="KW-0067">ATP-binding</keyword>
<keyword id="KW-0143">Chaperone</keyword>
<keyword id="KW-0547">Nucleotide-binding</keyword>
<keyword id="KW-0597">Phosphoprotein</keyword>
<keyword id="KW-0346">Stress response</keyword>
<evidence type="ECO:0000255" key="1">
    <source>
        <dbReference type="HAMAP-Rule" id="MF_00332"/>
    </source>
</evidence>
<evidence type="ECO:0000256" key="2">
    <source>
        <dbReference type="SAM" id="MobiDB-lite"/>
    </source>
</evidence>
<accession>A3NYX7</accession>
<sequence>MGKIIGIDLGTTNSCVAIMEGNQVKVIENSEGARTTPSIIAYMDDNEVLVGAPAKRQSVTNPKNTLFAVKRLIGRRFEEKEVQKDIGLMPYAIIKADNGDAWVEAHGEKLAPPQVSAEVLRKMKKTAEDYLGEPVTEAVITVPAYFNDSQRQATKDAGRIAGLEVKRIINEPTAAALAFGLDKAEKGDRKIAVYDLGGGTFDVSIIEIADVDGEMQFEVLSTNGDTFLGGEDFDQRIIDYIIGEFKKEQGVDLSKDVLALQRLKEAAEKAKIELSSSQQTEINLPYITADASGPKHLNLKVTRAKLEALVEDLVERTIEPCRTAIKDAGVKVSDIDDVILVGGQTRMPKVQEKVKEFFGKEPRRDVNPDEAVAVGAAIQGQVLSGDRKDVLLLDVTPLSLGIETLGGVMTKMINKNTTIPTKHAQVYSTADDNQGAVTIKVFQGEREMAAGNKLLGEFNLEGIPPAPRGVPQIEVTFDIDANGILHVGAKDKATGKENKITIKANSGLSEAEIEKMVKDAEANAAEDHKLRELAESRNQGDALVHSTKKALTEYGDKLEAGEKEKIEAALKELEDVLKNASSDKAAIDAKVEAVATASQKLGEKMYADMQAQQAGAAGAAGAAAEGASAQGGAQPADDVVDADFKEVKKD</sequence>